<sequence length="78" mass="8663">MSNIEERVKKIIVEQLGVDEAEVKNESSFVEDLGADSLDTVELVMALEEEFDTEIPDEEAEKITTVQAAIDYVTSNAQ</sequence>
<proteinExistence type="inferred from homology"/>
<comment type="function">
    <text evidence="2">Carrier of the growing fatty acid chain in fatty acid biosynthesis.</text>
</comment>
<comment type="pathway">
    <text evidence="2">Lipid metabolism; fatty acid biosynthesis.</text>
</comment>
<comment type="subcellular location">
    <subcellularLocation>
        <location evidence="2">Cytoplasm</location>
    </subcellularLocation>
</comment>
<comment type="PTM">
    <text evidence="2">4'-phosphopantetheine is transferred from CoA to a specific serine of apo-ACP by AcpS. This modification is essential for activity because fatty acids are bound in thioester linkage to the sulfhydryl of the prosthetic group.</text>
</comment>
<comment type="similarity">
    <text evidence="2">Belongs to the acyl carrier protein (ACP) family.</text>
</comment>
<comment type="sequence caution" evidence="4">
    <conflict type="erroneous initiation">
        <sequence resource="EMBL-CDS" id="AAF95168"/>
    </conflict>
</comment>
<evidence type="ECO:0000250" key="1"/>
<evidence type="ECO:0000255" key="2">
    <source>
        <dbReference type="HAMAP-Rule" id="MF_01217"/>
    </source>
</evidence>
<evidence type="ECO:0000255" key="3">
    <source>
        <dbReference type="PROSITE-ProRule" id="PRU00258"/>
    </source>
</evidence>
<evidence type="ECO:0000305" key="4"/>
<organism>
    <name type="scientific">Vibrio cholerae serotype O1 (strain ATCC 39315 / El Tor Inaba N16961)</name>
    <dbReference type="NCBI Taxonomy" id="243277"/>
    <lineage>
        <taxon>Bacteria</taxon>
        <taxon>Pseudomonadati</taxon>
        <taxon>Pseudomonadota</taxon>
        <taxon>Gammaproteobacteria</taxon>
        <taxon>Vibrionales</taxon>
        <taxon>Vibrionaceae</taxon>
        <taxon>Vibrio</taxon>
    </lineage>
</organism>
<dbReference type="EMBL" id="AE003852">
    <property type="protein sequence ID" value="AAF95168.1"/>
    <property type="status" value="ALT_INIT"/>
    <property type="molecule type" value="Genomic_DNA"/>
</dbReference>
<dbReference type="PIR" id="E82128">
    <property type="entry name" value="E82128"/>
</dbReference>
<dbReference type="RefSeq" id="NP_231654.2">
    <property type="nucleotide sequence ID" value="NC_002505.1"/>
</dbReference>
<dbReference type="RefSeq" id="WP_000065130.1">
    <property type="nucleotide sequence ID" value="NZ_LT906614.1"/>
</dbReference>
<dbReference type="SMR" id="Q9KQH8"/>
<dbReference type="STRING" id="243277.VC_2020"/>
<dbReference type="EnsemblBacteria" id="AAF95168">
    <property type="protein sequence ID" value="AAF95168"/>
    <property type="gene ID" value="VC_2020"/>
</dbReference>
<dbReference type="GeneID" id="94013319"/>
<dbReference type="KEGG" id="vch:VC_2020"/>
<dbReference type="PATRIC" id="fig|243277.26.peg.1930"/>
<dbReference type="eggNOG" id="COG0236">
    <property type="taxonomic scope" value="Bacteria"/>
</dbReference>
<dbReference type="HOGENOM" id="CLU_108696_5_1_6"/>
<dbReference type="UniPathway" id="UPA00094"/>
<dbReference type="Proteomes" id="UP000000584">
    <property type="component" value="Chromosome 1"/>
</dbReference>
<dbReference type="GO" id="GO:0005829">
    <property type="term" value="C:cytosol"/>
    <property type="evidence" value="ECO:0000318"/>
    <property type="project" value="GO_Central"/>
</dbReference>
<dbReference type="GO" id="GO:0016020">
    <property type="term" value="C:membrane"/>
    <property type="evidence" value="ECO:0007669"/>
    <property type="project" value="GOC"/>
</dbReference>
<dbReference type="GO" id="GO:0000035">
    <property type="term" value="F:acyl binding"/>
    <property type="evidence" value="ECO:0000318"/>
    <property type="project" value="GO_Central"/>
</dbReference>
<dbReference type="GO" id="GO:0000036">
    <property type="term" value="F:acyl carrier activity"/>
    <property type="evidence" value="ECO:0000318"/>
    <property type="project" value="GO_Central"/>
</dbReference>
<dbReference type="GO" id="GO:0009245">
    <property type="term" value="P:lipid A biosynthetic process"/>
    <property type="evidence" value="ECO:0000318"/>
    <property type="project" value="GO_Central"/>
</dbReference>
<dbReference type="FunFam" id="1.10.1200.10:FF:000001">
    <property type="entry name" value="Acyl carrier protein"/>
    <property type="match status" value="1"/>
</dbReference>
<dbReference type="Gene3D" id="1.10.1200.10">
    <property type="entry name" value="ACP-like"/>
    <property type="match status" value="1"/>
</dbReference>
<dbReference type="HAMAP" id="MF_01217">
    <property type="entry name" value="Acyl_carrier"/>
    <property type="match status" value="1"/>
</dbReference>
<dbReference type="InterPro" id="IPR003231">
    <property type="entry name" value="ACP"/>
</dbReference>
<dbReference type="InterPro" id="IPR036736">
    <property type="entry name" value="ACP-like_sf"/>
</dbReference>
<dbReference type="InterPro" id="IPR009081">
    <property type="entry name" value="PP-bd_ACP"/>
</dbReference>
<dbReference type="InterPro" id="IPR006162">
    <property type="entry name" value="Ppantetheine_attach_site"/>
</dbReference>
<dbReference type="NCBIfam" id="TIGR00517">
    <property type="entry name" value="acyl_carrier"/>
    <property type="match status" value="1"/>
</dbReference>
<dbReference type="NCBIfam" id="NF002148">
    <property type="entry name" value="PRK00982.1-2"/>
    <property type="match status" value="1"/>
</dbReference>
<dbReference type="NCBIfam" id="NF002149">
    <property type="entry name" value="PRK00982.1-3"/>
    <property type="match status" value="1"/>
</dbReference>
<dbReference type="NCBIfam" id="NF002150">
    <property type="entry name" value="PRK00982.1-4"/>
    <property type="match status" value="1"/>
</dbReference>
<dbReference type="NCBIfam" id="NF002151">
    <property type="entry name" value="PRK00982.1-5"/>
    <property type="match status" value="1"/>
</dbReference>
<dbReference type="PANTHER" id="PTHR20863">
    <property type="entry name" value="ACYL CARRIER PROTEIN"/>
    <property type="match status" value="1"/>
</dbReference>
<dbReference type="PANTHER" id="PTHR20863:SF76">
    <property type="entry name" value="CARRIER DOMAIN-CONTAINING PROTEIN"/>
    <property type="match status" value="1"/>
</dbReference>
<dbReference type="Pfam" id="PF00550">
    <property type="entry name" value="PP-binding"/>
    <property type="match status" value="1"/>
</dbReference>
<dbReference type="SUPFAM" id="SSF47336">
    <property type="entry name" value="ACP-like"/>
    <property type="match status" value="1"/>
</dbReference>
<dbReference type="PROSITE" id="PS50075">
    <property type="entry name" value="CARRIER"/>
    <property type="match status" value="1"/>
</dbReference>
<dbReference type="PROSITE" id="PS00012">
    <property type="entry name" value="PHOSPHOPANTETHEINE"/>
    <property type="match status" value="1"/>
</dbReference>
<protein>
    <recommendedName>
        <fullName evidence="2">Acyl carrier protein</fullName>
        <shortName evidence="2">ACP</shortName>
    </recommendedName>
</protein>
<feature type="initiator methionine" description="Removed" evidence="1">
    <location>
        <position position="1"/>
    </location>
</feature>
<feature type="chain" id="PRO_0000180213" description="Acyl carrier protein">
    <location>
        <begin position="2"/>
        <end position="78"/>
    </location>
</feature>
<feature type="domain" description="Carrier" evidence="3">
    <location>
        <begin position="2"/>
        <end position="77"/>
    </location>
</feature>
<feature type="modified residue" description="O-(pantetheine 4'-phosphoryl)serine" evidence="3">
    <location>
        <position position="37"/>
    </location>
</feature>
<keyword id="KW-0963">Cytoplasm</keyword>
<keyword id="KW-0275">Fatty acid biosynthesis</keyword>
<keyword id="KW-0276">Fatty acid metabolism</keyword>
<keyword id="KW-0444">Lipid biosynthesis</keyword>
<keyword id="KW-0443">Lipid metabolism</keyword>
<keyword id="KW-0596">Phosphopantetheine</keyword>
<keyword id="KW-0597">Phosphoprotein</keyword>
<keyword id="KW-1185">Reference proteome</keyword>
<reference key="1">
    <citation type="journal article" date="2000" name="Nature">
        <title>DNA sequence of both chromosomes of the cholera pathogen Vibrio cholerae.</title>
        <authorList>
            <person name="Heidelberg J.F."/>
            <person name="Eisen J.A."/>
            <person name="Nelson W.C."/>
            <person name="Clayton R.A."/>
            <person name="Gwinn M.L."/>
            <person name="Dodson R.J."/>
            <person name="Haft D.H."/>
            <person name="Hickey E.K."/>
            <person name="Peterson J.D."/>
            <person name="Umayam L.A."/>
            <person name="Gill S.R."/>
            <person name="Nelson K.E."/>
            <person name="Read T.D."/>
            <person name="Tettelin H."/>
            <person name="Richardson D.L."/>
            <person name="Ermolaeva M.D."/>
            <person name="Vamathevan J.J."/>
            <person name="Bass S."/>
            <person name="Qin H."/>
            <person name="Dragoi I."/>
            <person name="Sellers P."/>
            <person name="McDonald L.A."/>
            <person name="Utterback T.R."/>
            <person name="Fleischmann R.D."/>
            <person name="Nierman W.C."/>
            <person name="White O."/>
            <person name="Salzberg S.L."/>
            <person name="Smith H.O."/>
            <person name="Colwell R.R."/>
            <person name="Mekalanos J.J."/>
            <person name="Venter J.C."/>
            <person name="Fraser C.M."/>
        </authorList>
    </citation>
    <scope>NUCLEOTIDE SEQUENCE [LARGE SCALE GENOMIC DNA]</scope>
    <source>
        <strain>ATCC 39315 / El Tor Inaba N16961</strain>
    </source>
</reference>
<name>ACP_VIBCH</name>
<accession>Q9KQH8</accession>
<gene>
    <name evidence="2" type="primary">acpP</name>
    <name type="ordered locus">VC_2020</name>
</gene>